<organism>
    <name type="scientific">Pseudomonas aeruginosa (strain LESB58)</name>
    <dbReference type="NCBI Taxonomy" id="557722"/>
    <lineage>
        <taxon>Bacteria</taxon>
        <taxon>Pseudomonadati</taxon>
        <taxon>Pseudomonadota</taxon>
        <taxon>Gammaproteobacteria</taxon>
        <taxon>Pseudomonadales</taxon>
        <taxon>Pseudomonadaceae</taxon>
        <taxon>Pseudomonas</taxon>
    </lineage>
</organism>
<sequence length="88" mass="9775">MARVTVEDCLDNVDNRFELVMLATKRARQLATGGKEPKVAWENDKPTVVALREIASGLVDENVVQQEDIVEDEPLFAAFDDEANTEAL</sequence>
<name>RPOZ_PSEA8</name>
<proteinExistence type="inferred from homology"/>
<keyword id="KW-0240">DNA-directed RNA polymerase</keyword>
<keyword id="KW-0548">Nucleotidyltransferase</keyword>
<keyword id="KW-0804">Transcription</keyword>
<keyword id="KW-0808">Transferase</keyword>
<reference key="1">
    <citation type="journal article" date="2009" name="Genome Res.">
        <title>Newly introduced genomic prophage islands are critical determinants of in vivo competitiveness in the Liverpool epidemic strain of Pseudomonas aeruginosa.</title>
        <authorList>
            <person name="Winstanley C."/>
            <person name="Langille M.G.I."/>
            <person name="Fothergill J.L."/>
            <person name="Kukavica-Ibrulj I."/>
            <person name="Paradis-Bleau C."/>
            <person name="Sanschagrin F."/>
            <person name="Thomson N.R."/>
            <person name="Winsor G.L."/>
            <person name="Quail M.A."/>
            <person name="Lennard N."/>
            <person name="Bignell A."/>
            <person name="Clarke L."/>
            <person name="Seeger K."/>
            <person name="Saunders D."/>
            <person name="Harris D."/>
            <person name="Parkhill J."/>
            <person name="Hancock R.E.W."/>
            <person name="Brinkman F.S.L."/>
            <person name="Levesque R.C."/>
        </authorList>
    </citation>
    <scope>NUCLEOTIDE SEQUENCE [LARGE SCALE GENOMIC DNA]</scope>
    <source>
        <strain>LESB58</strain>
    </source>
</reference>
<gene>
    <name evidence="1" type="primary">rpoZ</name>
    <name type="ordered locus">PLES_57321</name>
</gene>
<comment type="function">
    <text evidence="1">Promotes RNA polymerase assembly. Latches the N- and C-terminal regions of the beta' subunit thereby facilitating its interaction with the beta and alpha subunits.</text>
</comment>
<comment type="catalytic activity">
    <reaction evidence="1">
        <text>RNA(n) + a ribonucleoside 5'-triphosphate = RNA(n+1) + diphosphate</text>
        <dbReference type="Rhea" id="RHEA:21248"/>
        <dbReference type="Rhea" id="RHEA-COMP:14527"/>
        <dbReference type="Rhea" id="RHEA-COMP:17342"/>
        <dbReference type="ChEBI" id="CHEBI:33019"/>
        <dbReference type="ChEBI" id="CHEBI:61557"/>
        <dbReference type="ChEBI" id="CHEBI:140395"/>
        <dbReference type="EC" id="2.7.7.6"/>
    </reaction>
</comment>
<comment type="subunit">
    <text evidence="1">The RNAP catalytic core consists of 2 alpha, 1 beta, 1 beta' and 1 omega subunit. When a sigma factor is associated with the core the holoenzyme is formed, which can initiate transcription.</text>
</comment>
<comment type="similarity">
    <text evidence="1">Belongs to the RNA polymerase subunit omega family.</text>
</comment>
<accession>B7V5M8</accession>
<dbReference type="EC" id="2.7.7.6" evidence="1"/>
<dbReference type="EMBL" id="FM209186">
    <property type="protein sequence ID" value="CAW30486.1"/>
    <property type="molecule type" value="Genomic_DNA"/>
</dbReference>
<dbReference type="RefSeq" id="WP_003096602.1">
    <property type="nucleotide sequence ID" value="NC_011770.1"/>
</dbReference>
<dbReference type="SMR" id="B7V5M8"/>
<dbReference type="GeneID" id="77223868"/>
<dbReference type="KEGG" id="pag:PLES_57321"/>
<dbReference type="HOGENOM" id="CLU_125406_5_3_6"/>
<dbReference type="GO" id="GO:0000428">
    <property type="term" value="C:DNA-directed RNA polymerase complex"/>
    <property type="evidence" value="ECO:0007669"/>
    <property type="project" value="UniProtKB-KW"/>
</dbReference>
<dbReference type="GO" id="GO:0003677">
    <property type="term" value="F:DNA binding"/>
    <property type="evidence" value="ECO:0007669"/>
    <property type="project" value="UniProtKB-UniRule"/>
</dbReference>
<dbReference type="GO" id="GO:0003899">
    <property type="term" value="F:DNA-directed RNA polymerase activity"/>
    <property type="evidence" value="ECO:0007669"/>
    <property type="project" value="UniProtKB-UniRule"/>
</dbReference>
<dbReference type="GO" id="GO:0006351">
    <property type="term" value="P:DNA-templated transcription"/>
    <property type="evidence" value="ECO:0007669"/>
    <property type="project" value="UniProtKB-UniRule"/>
</dbReference>
<dbReference type="Gene3D" id="3.90.940.10">
    <property type="match status" value="1"/>
</dbReference>
<dbReference type="HAMAP" id="MF_00366">
    <property type="entry name" value="RNApol_bact_RpoZ"/>
    <property type="match status" value="1"/>
</dbReference>
<dbReference type="InterPro" id="IPR003716">
    <property type="entry name" value="DNA-dir_RNA_pol_omega"/>
</dbReference>
<dbReference type="InterPro" id="IPR006110">
    <property type="entry name" value="Pol_omega/Rpo6/RPB6"/>
</dbReference>
<dbReference type="InterPro" id="IPR036161">
    <property type="entry name" value="RPB6/omega-like_sf"/>
</dbReference>
<dbReference type="NCBIfam" id="TIGR00690">
    <property type="entry name" value="rpoZ"/>
    <property type="match status" value="1"/>
</dbReference>
<dbReference type="PANTHER" id="PTHR34476">
    <property type="entry name" value="DNA-DIRECTED RNA POLYMERASE SUBUNIT OMEGA"/>
    <property type="match status" value="1"/>
</dbReference>
<dbReference type="PANTHER" id="PTHR34476:SF1">
    <property type="entry name" value="DNA-DIRECTED RNA POLYMERASE SUBUNIT OMEGA"/>
    <property type="match status" value="1"/>
</dbReference>
<dbReference type="Pfam" id="PF01192">
    <property type="entry name" value="RNA_pol_Rpb6"/>
    <property type="match status" value="1"/>
</dbReference>
<dbReference type="SMART" id="SM01409">
    <property type="entry name" value="RNA_pol_Rpb6"/>
    <property type="match status" value="1"/>
</dbReference>
<dbReference type="SUPFAM" id="SSF63562">
    <property type="entry name" value="RPB6/omega subunit-like"/>
    <property type="match status" value="1"/>
</dbReference>
<protein>
    <recommendedName>
        <fullName evidence="1">DNA-directed RNA polymerase subunit omega</fullName>
        <shortName evidence="1">RNAP omega subunit</shortName>
        <ecNumber evidence="1">2.7.7.6</ecNumber>
    </recommendedName>
    <alternativeName>
        <fullName evidence="1">RNA polymerase omega subunit</fullName>
    </alternativeName>
    <alternativeName>
        <fullName evidence="1">Transcriptase subunit omega</fullName>
    </alternativeName>
</protein>
<feature type="chain" id="PRO_1000121257" description="DNA-directed RNA polymerase subunit omega">
    <location>
        <begin position="1"/>
        <end position="88"/>
    </location>
</feature>
<evidence type="ECO:0000255" key="1">
    <source>
        <dbReference type="HAMAP-Rule" id="MF_00366"/>
    </source>
</evidence>